<comment type="function">
    <text evidence="1">Catalyzes the conversion of uracil and 5-phospho-alpha-D-ribose 1-diphosphate (PRPP) to UMP and diphosphate.</text>
</comment>
<comment type="catalytic activity">
    <reaction evidence="1">
        <text>UMP + diphosphate = 5-phospho-alpha-D-ribose 1-diphosphate + uracil</text>
        <dbReference type="Rhea" id="RHEA:13017"/>
        <dbReference type="ChEBI" id="CHEBI:17568"/>
        <dbReference type="ChEBI" id="CHEBI:33019"/>
        <dbReference type="ChEBI" id="CHEBI:57865"/>
        <dbReference type="ChEBI" id="CHEBI:58017"/>
        <dbReference type="EC" id="2.4.2.9"/>
    </reaction>
</comment>
<comment type="cofactor">
    <cofactor evidence="1">
        <name>Mg(2+)</name>
        <dbReference type="ChEBI" id="CHEBI:18420"/>
    </cofactor>
    <text evidence="1">Binds 1 Mg(2+) ion per subunit. The magnesium is bound as Mg-PRPP.</text>
</comment>
<comment type="activity regulation">
    <text evidence="1">Allosterically activated by GTP.</text>
</comment>
<comment type="pathway">
    <text evidence="1">Pyrimidine metabolism; UMP biosynthesis via salvage pathway; UMP from uracil: step 1/1.</text>
</comment>
<comment type="similarity">
    <text evidence="1">Belongs to the UPRTase family.</text>
</comment>
<reference key="1">
    <citation type="journal article" date="2004" name="Proc. Natl. Acad. Sci. U.S.A.">
        <title>Genome sequence of the enterobacterial phytopathogen Erwinia carotovora subsp. atroseptica and characterization of virulence factors.</title>
        <authorList>
            <person name="Bell K.S."/>
            <person name="Sebaihia M."/>
            <person name="Pritchard L."/>
            <person name="Holden M.T.G."/>
            <person name="Hyman L.J."/>
            <person name="Holeva M.C."/>
            <person name="Thomson N.R."/>
            <person name="Bentley S.D."/>
            <person name="Churcher L.J.C."/>
            <person name="Mungall K."/>
            <person name="Atkin R."/>
            <person name="Bason N."/>
            <person name="Brooks K."/>
            <person name="Chillingworth T."/>
            <person name="Clark K."/>
            <person name="Doggett J."/>
            <person name="Fraser A."/>
            <person name="Hance Z."/>
            <person name="Hauser H."/>
            <person name="Jagels K."/>
            <person name="Moule S."/>
            <person name="Norbertczak H."/>
            <person name="Ormond D."/>
            <person name="Price C."/>
            <person name="Quail M.A."/>
            <person name="Sanders M."/>
            <person name="Walker D."/>
            <person name="Whitehead S."/>
            <person name="Salmond G.P.C."/>
            <person name="Birch P.R.J."/>
            <person name="Parkhill J."/>
            <person name="Toth I.K."/>
        </authorList>
    </citation>
    <scope>NUCLEOTIDE SEQUENCE [LARGE SCALE GENOMIC DNA]</scope>
    <source>
        <strain>SCRI 1043 / ATCC BAA-672</strain>
    </source>
</reference>
<accession>Q6D7S0</accession>
<feature type="chain" id="PRO_0000120828" description="Uracil phosphoribosyltransferase">
    <location>
        <begin position="1"/>
        <end position="208"/>
    </location>
</feature>
<feature type="binding site" evidence="1">
    <location>
        <position position="78"/>
    </location>
    <ligand>
        <name>5-phospho-alpha-D-ribose 1-diphosphate</name>
        <dbReference type="ChEBI" id="CHEBI:58017"/>
    </ligand>
</feature>
<feature type="binding site" evidence="1">
    <location>
        <position position="103"/>
    </location>
    <ligand>
        <name>5-phospho-alpha-D-ribose 1-diphosphate</name>
        <dbReference type="ChEBI" id="CHEBI:58017"/>
    </ligand>
</feature>
<feature type="binding site" evidence="1">
    <location>
        <begin position="130"/>
        <end position="138"/>
    </location>
    <ligand>
        <name>5-phospho-alpha-D-ribose 1-diphosphate</name>
        <dbReference type="ChEBI" id="CHEBI:58017"/>
    </ligand>
</feature>
<feature type="binding site" evidence="1">
    <location>
        <position position="193"/>
    </location>
    <ligand>
        <name>uracil</name>
        <dbReference type="ChEBI" id="CHEBI:17568"/>
    </ligand>
</feature>
<feature type="binding site" evidence="1">
    <location>
        <begin position="198"/>
        <end position="200"/>
    </location>
    <ligand>
        <name>uracil</name>
        <dbReference type="ChEBI" id="CHEBI:17568"/>
    </ligand>
</feature>
<feature type="binding site" evidence="1">
    <location>
        <position position="199"/>
    </location>
    <ligand>
        <name>5-phospho-alpha-D-ribose 1-diphosphate</name>
        <dbReference type="ChEBI" id="CHEBI:58017"/>
    </ligand>
</feature>
<organism>
    <name type="scientific">Pectobacterium atrosepticum (strain SCRI 1043 / ATCC BAA-672)</name>
    <name type="common">Erwinia carotovora subsp. atroseptica</name>
    <dbReference type="NCBI Taxonomy" id="218491"/>
    <lineage>
        <taxon>Bacteria</taxon>
        <taxon>Pseudomonadati</taxon>
        <taxon>Pseudomonadota</taxon>
        <taxon>Gammaproteobacteria</taxon>
        <taxon>Enterobacterales</taxon>
        <taxon>Pectobacteriaceae</taxon>
        <taxon>Pectobacterium</taxon>
    </lineage>
</organism>
<gene>
    <name evidence="1" type="primary">upp</name>
    <name type="ordered locus">ECA1255</name>
</gene>
<dbReference type="EC" id="2.4.2.9" evidence="1"/>
<dbReference type="EMBL" id="BX950851">
    <property type="protein sequence ID" value="CAG74165.1"/>
    <property type="molecule type" value="Genomic_DNA"/>
</dbReference>
<dbReference type="RefSeq" id="WP_010307474.1">
    <property type="nucleotide sequence ID" value="NC_004547.2"/>
</dbReference>
<dbReference type="SMR" id="Q6D7S0"/>
<dbReference type="STRING" id="218491.ECA1255"/>
<dbReference type="GeneID" id="93389350"/>
<dbReference type="KEGG" id="eca:ECA1255"/>
<dbReference type="eggNOG" id="COG0035">
    <property type="taxonomic scope" value="Bacteria"/>
</dbReference>
<dbReference type="HOGENOM" id="CLU_067096_2_2_6"/>
<dbReference type="OrthoDB" id="9781675at2"/>
<dbReference type="UniPathway" id="UPA00574">
    <property type="reaction ID" value="UER00636"/>
</dbReference>
<dbReference type="Proteomes" id="UP000007966">
    <property type="component" value="Chromosome"/>
</dbReference>
<dbReference type="GO" id="GO:0005525">
    <property type="term" value="F:GTP binding"/>
    <property type="evidence" value="ECO:0007669"/>
    <property type="project" value="UniProtKB-KW"/>
</dbReference>
<dbReference type="GO" id="GO:0000287">
    <property type="term" value="F:magnesium ion binding"/>
    <property type="evidence" value="ECO:0007669"/>
    <property type="project" value="UniProtKB-UniRule"/>
</dbReference>
<dbReference type="GO" id="GO:0004845">
    <property type="term" value="F:uracil phosphoribosyltransferase activity"/>
    <property type="evidence" value="ECO:0007669"/>
    <property type="project" value="UniProtKB-UniRule"/>
</dbReference>
<dbReference type="GO" id="GO:0044206">
    <property type="term" value="P:UMP salvage"/>
    <property type="evidence" value="ECO:0007669"/>
    <property type="project" value="UniProtKB-UniRule"/>
</dbReference>
<dbReference type="GO" id="GO:0006223">
    <property type="term" value="P:uracil salvage"/>
    <property type="evidence" value="ECO:0007669"/>
    <property type="project" value="InterPro"/>
</dbReference>
<dbReference type="CDD" id="cd06223">
    <property type="entry name" value="PRTases_typeI"/>
    <property type="match status" value="1"/>
</dbReference>
<dbReference type="FunFam" id="3.40.50.2020:FF:000003">
    <property type="entry name" value="Uracil phosphoribosyltransferase"/>
    <property type="match status" value="1"/>
</dbReference>
<dbReference type="Gene3D" id="3.40.50.2020">
    <property type="match status" value="1"/>
</dbReference>
<dbReference type="HAMAP" id="MF_01218_B">
    <property type="entry name" value="Upp_B"/>
    <property type="match status" value="1"/>
</dbReference>
<dbReference type="InterPro" id="IPR000836">
    <property type="entry name" value="PRibTrfase_dom"/>
</dbReference>
<dbReference type="InterPro" id="IPR029057">
    <property type="entry name" value="PRTase-like"/>
</dbReference>
<dbReference type="InterPro" id="IPR034332">
    <property type="entry name" value="Upp_B"/>
</dbReference>
<dbReference type="InterPro" id="IPR050054">
    <property type="entry name" value="UPRTase/APRTase"/>
</dbReference>
<dbReference type="InterPro" id="IPR005765">
    <property type="entry name" value="Ura_phspho_trans"/>
</dbReference>
<dbReference type="NCBIfam" id="NF001097">
    <property type="entry name" value="PRK00129.1"/>
    <property type="match status" value="1"/>
</dbReference>
<dbReference type="NCBIfam" id="TIGR01091">
    <property type="entry name" value="upp"/>
    <property type="match status" value="1"/>
</dbReference>
<dbReference type="PANTHER" id="PTHR32315">
    <property type="entry name" value="ADENINE PHOSPHORIBOSYLTRANSFERASE"/>
    <property type="match status" value="1"/>
</dbReference>
<dbReference type="PANTHER" id="PTHR32315:SF4">
    <property type="entry name" value="URACIL PHOSPHORIBOSYLTRANSFERASE, CHLOROPLASTIC"/>
    <property type="match status" value="1"/>
</dbReference>
<dbReference type="Pfam" id="PF14681">
    <property type="entry name" value="UPRTase"/>
    <property type="match status" value="1"/>
</dbReference>
<dbReference type="SUPFAM" id="SSF53271">
    <property type="entry name" value="PRTase-like"/>
    <property type="match status" value="1"/>
</dbReference>
<name>UPP_PECAS</name>
<sequence length="208" mass="22496">MKIVEVKHPLVKHKLGLMRENDISTKRFRELASEVGSLLTYEATADLATEKVTIDGWCGPVEVDQIKGKKITVVPILRAGLGMMDGVLENVPSARISVVGIYRDEETLEPVPYFQKLVSNIEERMALVVDPMLATGGSMIATIDLLKKAGCHSIKVLVLVAAPEGIAALEKAHPDVELYTASIDKGLNEQGYIMPGLGDAGDKIFGTK</sequence>
<keyword id="KW-0021">Allosteric enzyme</keyword>
<keyword id="KW-0328">Glycosyltransferase</keyword>
<keyword id="KW-0342">GTP-binding</keyword>
<keyword id="KW-0460">Magnesium</keyword>
<keyword id="KW-0547">Nucleotide-binding</keyword>
<keyword id="KW-1185">Reference proteome</keyword>
<keyword id="KW-0808">Transferase</keyword>
<protein>
    <recommendedName>
        <fullName evidence="1">Uracil phosphoribosyltransferase</fullName>
        <ecNumber evidence="1">2.4.2.9</ecNumber>
    </recommendedName>
    <alternativeName>
        <fullName evidence="1">UMP pyrophosphorylase</fullName>
    </alternativeName>
    <alternativeName>
        <fullName evidence="1">UPRTase</fullName>
    </alternativeName>
</protein>
<evidence type="ECO:0000255" key="1">
    <source>
        <dbReference type="HAMAP-Rule" id="MF_01218"/>
    </source>
</evidence>
<proteinExistence type="inferred from homology"/>